<protein>
    <recommendedName>
        <fullName evidence="1">Anthranilate phosphoribosyltransferase</fullName>
        <ecNumber evidence="1">2.4.2.18</ecNumber>
    </recommendedName>
</protein>
<sequence>MEPRAAVLKLIEHKHLTTLEAESFMNHVMKGEVSEILLSSFLTAMRFNGESVEEVLGCTLALRKNALRPKTVFPFDLLDTCGTGGDGQGTINISTLSAIVLASLGIKVAKHGNRSVSSHTGSSDILTRLGYQTETTQEEVEAHLVNRGFTFLFAPMWHPSMKHAGPVRKELGFRTVFNMIGPLSNPFSPQFQIIGVYQPELMELFIKVLQSLGLKRALVCHSRDGLDEFSIFQITDYTFLENGVISRHSFDPKILGLSSLNKEEVYASSSDHAEVLARKVLNSESIAGTHAVALNAGAGLFVMGKIDTIEQGYQIAKEAILSGKTKKYFEDLISKE</sequence>
<evidence type="ECO:0000255" key="1">
    <source>
        <dbReference type="HAMAP-Rule" id="MF_00211"/>
    </source>
</evidence>
<comment type="function">
    <text evidence="1">Catalyzes the transfer of the phosphoribosyl group of 5-phosphorylribose-1-pyrophosphate (PRPP) to anthranilate to yield N-(5'-phosphoribosyl)-anthranilate (PRA).</text>
</comment>
<comment type="catalytic activity">
    <reaction evidence="1">
        <text>N-(5-phospho-beta-D-ribosyl)anthranilate + diphosphate = 5-phospho-alpha-D-ribose 1-diphosphate + anthranilate</text>
        <dbReference type="Rhea" id="RHEA:11768"/>
        <dbReference type="ChEBI" id="CHEBI:16567"/>
        <dbReference type="ChEBI" id="CHEBI:18277"/>
        <dbReference type="ChEBI" id="CHEBI:33019"/>
        <dbReference type="ChEBI" id="CHEBI:58017"/>
        <dbReference type="EC" id="2.4.2.18"/>
    </reaction>
</comment>
<comment type="cofactor">
    <cofactor evidence="1">
        <name>Mg(2+)</name>
        <dbReference type="ChEBI" id="CHEBI:18420"/>
    </cofactor>
    <text evidence="1">Binds 2 magnesium ions per monomer.</text>
</comment>
<comment type="pathway">
    <text evidence="1">Amino-acid biosynthesis; L-tryptophan biosynthesis; L-tryptophan from chorismate: step 2/5.</text>
</comment>
<comment type="subunit">
    <text evidence="1">Homodimer.</text>
</comment>
<comment type="similarity">
    <text evidence="1">Belongs to the anthranilate phosphoribosyltransferase family.</text>
</comment>
<gene>
    <name evidence="1" type="primary">trpD</name>
    <name type="ordered locus">LA_1140</name>
</gene>
<name>TRPD_LEPIN</name>
<proteinExistence type="inferred from homology"/>
<organism>
    <name type="scientific">Leptospira interrogans serogroup Icterohaemorrhagiae serovar Lai (strain 56601)</name>
    <dbReference type="NCBI Taxonomy" id="189518"/>
    <lineage>
        <taxon>Bacteria</taxon>
        <taxon>Pseudomonadati</taxon>
        <taxon>Spirochaetota</taxon>
        <taxon>Spirochaetia</taxon>
        <taxon>Leptospirales</taxon>
        <taxon>Leptospiraceae</taxon>
        <taxon>Leptospira</taxon>
    </lineage>
</organism>
<dbReference type="EC" id="2.4.2.18" evidence="1"/>
<dbReference type="EMBL" id="AE010300">
    <property type="protein sequence ID" value="AAN48339.1"/>
    <property type="molecule type" value="Genomic_DNA"/>
</dbReference>
<dbReference type="RefSeq" id="NP_711321.1">
    <property type="nucleotide sequence ID" value="NC_004342.2"/>
</dbReference>
<dbReference type="RefSeq" id="WP_000433682.1">
    <property type="nucleotide sequence ID" value="NC_004342.2"/>
</dbReference>
<dbReference type="SMR" id="Q8F708"/>
<dbReference type="FunCoup" id="Q8F708">
    <property type="interactions" value="364"/>
</dbReference>
<dbReference type="STRING" id="189518.LA_1140"/>
<dbReference type="PaxDb" id="189518-LA_1140"/>
<dbReference type="EnsemblBacteria" id="AAN48339">
    <property type="protein sequence ID" value="AAN48339"/>
    <property type="gene ID" value="LA_1140"/>
</dbReference>
<dbReference type="KEGG" id="lil:LA_1140"/>
<dbReference type="PATRIC" id="fig|189518.3.peg.1135"/>
<dbReference type="HOGENOM" id="CLU_034315_2_1_12"/>
<dbReference type="InParanoid" id="Q8F708"/>
<dbReference type="OrthoDB" id="9806430at2"/>
<dbReference type="UniPathway" id="UPA00035">
    <property type="reaction ID" value="UER00041"/>
</dbReference>
<dbReference type="Proteomes" id="UP000001408">
    <property type="component" value="Chromosome I"/>
</dbReference>
<dbReference type="GO" id="GO:0005829">
    <property type="term" value="C:cytosol"/>
    <property type="evidence" value="ECO:0000318"/>
    <property type="project" value="GO_Central"/>
</dbReference>
<dbReference type="GO" id="GO:0004048">
    <property type="term" value="F:anthranilate phosphoribosyltransferase activity"/>
    <property type="evidence" value="ECO:0007669"/>
    <property type="project" value="UniProtKB-UniRule"/>
</dbReference>
<dbReference type="GO" id="GO:0000287">
    <property type="term" value="F:magnesium ion binding"/>
    <property type="evidence" value="ECO:0007669"/>
    <property type="project" value="UniProtKB-UniRule"/>
</dbReference>
<dbReference type="GO" id="GO:0000162">
    <property type="term" value="P:L-tryptophan biosynthetic process"/>
    <property type="evidence" value="ECO:0000318"/>
    <property type="project" value="GO_Central"/>
</dbReference>
<dbReference type="FunFam" id="3.40.1030.10:FF:000002">
    <property type="entry name" value="Anthranilate phosphoribosyltransferase"/>
    <property type="match status" value="1"/>
</dbReference>
<dbReference type="Gene3D" id="3.40.1030.10">
    <property type="entry name" value="Nucleoside phosphorylase/phosphoribosyltransferase catalytic domain"/>
    <property type="match status" value="1"/>
</dbReference>
<dbReference type="Gene3D" id="1.20.970.10">
    <property type="entry name" value="Transferase, Pyrimidine Nucleoside Phosphorylase, Chain C"/>
    <property type="match status" value="1"/>
</dbReference>
<dbReference type="HAMAP" id="MF_00211">
    <property type="entry name" value="TrpD"/>
    <property type="match status" value="1"/>
</dbReference>
<dbReference type="InterPro" id="IPR005940">
    <property type="entry name" value="Anthranilate_Pribosyl_Tfrase"/>
</dbReference>
<dbReference type="InterPro" id="IPR000312">
    <property type="entry name" value="Glycosyl_Trfase_fam3"/>
</dbReference>
<dbReference type="InterPro" id="IPR017459">
    <property type="entry name" value="Glycosyl_Trfase_fam3_N_dom"/>
</dbReference>
<dbReference type="InterPro" id="IPR036320">
    <property type="entry name" value="Glycosyl_Trfase_fam3_N_dom_sf"/>
</dbReference>
<dbReference type="InterPro" id="IPR035902">
    <property type="entry name" value="Nuc_phospho_transferase"/>
</dbReference>
<dbReference type="NCBIfam" id="TIGR01245">
    <property type="entry name" value="trpD"/>
    <property type="match status" value="1"/>
</dbReference>
<dbReference type="PANTHER" id="PTHR43285">
    <property type="entry name" value="ANTHRANILATE PHOSPHORIBOSYLTRANSFERASE"/>
    <property type="match status" value="1"/>
</dbReference>
<dbReference type="PANTHER" id="PTHR43285:SF2">
    <property type="entry name" value="ANTHRANILATE PHOSPHORIBOSYLTRANSFERASE"/>
    <property type="match status" value="1"/>
</dbReference>
<dbReference type="Pfam" id="PF02885">
    <property type="entry name" value="Glycos_trans_3N"/>
    <property type="match status" value="1"/>
</dbReference>
<dbReference type="Pfam" id="PF00591">
    <property type="entry name" value="Glycos_transf_3"/>
    <property type="match status" value="1"/>
</dbReference>
<dbReference type="SUPFAM" id="SSF52418">
    <property type="entry name" value="Nucleoside phosphorylase/phosphoribosyltransferase catalytic domain"/>
    <property type="match status" value="1"/>
</dbReference>
<dbReference type="SUPFAM" id="SSF47648">
    <property type="entry name" value="Nucleoside phosphorylase/phosphoribosyltransferase N-terminal domain"/>
    <property type="match status" value="1"/>
</dbReference>
<feature type="chain" id="PRO_0000154456" description="Anthranilate phosphoribosyltransferase">
    <location>
        <begin position="1"/>
        <end position="336"/>
    </location>
</feature>
<feature type="binding site" evidence="1">
    <location>
        <position position="82"/>
    </location>
    <ligand>
        <name>5-phospho-alpha-D-ribose 1-diphosphate</name>
        <dbReference type="ChEBI" id="CHEBI:58017"/>
    </ligand>
</feature>
<feature type="binding site" evidence="1">
    <location>
        <position position="82"/>
    </location>
    <ligand>
        <name>anthranilate</name>
        <dbReference type="ChEBI" id="CHEBI:16567"/>
        <label>1</label>
    </ligand>
</feature>
<feature type="binding site" evidence="1">
    <location>
        <begin position="85"/>
        <end position="86"/>
    </location>
    <ligand>
        <name>5-phospho-alpha-D-ribose 1-diphosphate</name>
        <dbReference type="ChEBI" id="CHEBI:58017"/>
    </ligand>
</feature>
<feature type="binding site" evidence="1">
    <location>
        <position position="90"/>
    </location>
    <ligand>
        <name>5-phospho-alpha-D-ribose 1-diphosphate</name>
        <dbReference type="ChEBI" id="CHEBI:58017"/>
    </ligand>
</feature>
<feature type="binding site" evidence="1">
    <location>
        <begin position="92"/>
        <end position="95"/>
    </location>
    <ligand>
        <name>5-phospho-alpha-D-ribose 1-diphosphate</name>
        <dbReference type="ChEBI" id="CHEBI:58017"/>
    </ligand>
</feature>
<feature type="binding site" evidence="1">
    <location>
        <position position="94"/>
    </location>
    <ligand>
        <name>Mg(2+)</name>
        <dbReference type="ChEBI" id="CHEBI:18420"/>
        <label>1</label>
    </ligand>
</feature>
<feature type="binding site" evidence="1">
    <location>
        <begin position="110"/>
        <end position="118"/>
    </location>
    <ligand>
        <name>5-phospho-alpha-D-ribose 1-diphosphate</name>
        <dbReference type="ChEBI" id="CHEBI:58017"/>
    </ligand>
</feature>
<feature type="binding site" evidence="1">
    <location>
        <position position="113"/>
    </location>
    <ligand>
        <name>anthranilate</name>
        <dbReference type="ChEBI" id="CHEBI:16567"/>
        <label>1</label>
    </ligand>
</feature>
<feature type="binding site" evidence="1">
    <location>
        <position position="122"/>
    </location>
    <ligand>
        <name>5-phospho-alpha-D-ribose 1-diphosphate</name>
        <dbReference type="ChEBI" id="CHEBI:58017"/>
    </ligand>
</feature>
<feature type="binding site" evidence="1">
    <location>
        <position position="168"/>
    </location>
    <ligand>
        <name>anthranilate</name>
        <dbReference type="ChEBI" id="CHEBI:16567"/>
        <label>2</label>
    </ligand>
</feature>
<feature type="binding site" evidence="1">
    <location>
        <position position="227"/>
    </location>
    <ligand>
        <name>Mg(2+)</name>
        <dbReference type="ChEBI" id="CHEBI:18420"/>
        <label>2</label>
    </ligand>
</feature>
<feature type="binding site" evidence="1">
    <location>
        <position position="228"/>
    </location>
    <ligand>
        <name>Mg(2+)</name>
        <dbReference type="ChEBI" id="CHEBI:18420"/>
        <label>1</label>
    </ligand>
</feature>
<feature type="binding site" evidence="1">
    <location>
        <position position="228"/>
    </location>
    <ligand>
        <name>Mg(2+)</name>
        <dbReference type="ChEBI" id="CHEBI:18420"/>
        <label>2</label>
    </ligand>
</feature>
<accession>Q8F708</accession>
<keyword id="KW-0028">Amino-acid biosynthesis</keyword>
<keyword id="KW-0057">Aromatic amino acid biosynthesis</keyword>
<keyword id="KW-0328">Glycosyltransferase</keyword>
<keyword id="KW-0460">Magnesium</keyword>
<keyword id="KW-0479">Metal-binding</keyword>
<keyword id="KW-1185">Reference proteome</keyword>
<keyword id="KW-0808">Transferase</keyword>
<keyword id="KW-0822">Tryptophan biosynthesis</keyword>
<reference key="1">
    <citation type="journal article" date="2003" name="Nature">
        <title>Unique physiological and pathogenic features of Leptospira interrogans revealed by whole-genome sequencing.</title>
        <authorList>
            <person name="Ren S.-X."/>
            <person name="Fu G."/>
            <person name="Jiang X.-G."/>
            <person name="Zeng R."/>
            <person name="Miao Y.-G."/>
            <person name="Xu H."/>
            <person name="Zhang Y.-X."/>
            <person name="Xiong H."/>
            <person name="Lu G."/>
            <person name="Lu L.-F."/>
            <person name="Jiang H.-Q."/>
            <person name="Jia J."/>
            <person name="Tu Y.-F."/>
            <person name="Jiang J.-X."/>
            <person name="Gu W.-Y."/>
            <person name="Zhang Y.-Q."/>
            <person name="Cai Z."/>
            <person name="Sheng H.-H."/>
            <person name="Yin H.-F."/>
            <person name="Zhang Y."/>
            <person name="Zhu G.-F."/>
            <person name="Wan M."/>
            <person name="Huang H.-L."/>
            <person name="Qian Z."/>
            <person name="Wang S.-Y."/>
            <person name="Ma W."/>
            <person name="Yao Z.-J."/>
            <person name="Shen Y."/>
            <person name="Qiang B.-Q."/>
            <person name="Xia Q.-C."/>
            <person name="Guo X.-K."/>
            <person name="Danchin A."/>
            <person name="Saint Girons I."/>
            <person name="Somerville R.L."/>
            <person name="Wen Y.-M."/>
            <person name="Shi M.-H."/>
            <person name="Chen Z."/>
            <person name="Xu J.-G."/>
            <person name="Zhao G.-P."/>
        </authorList>
    </citation>
    <scope>NUCLEOTIDE SEQUENCE [LARGE SCALE GENOMIC DNA]</scope>
    <source>
        <strain>56601</strain>
    </source>
</reference>